<proteinExistence type="inferred from homology"/>
<evidence type="ECO:0000255" key="1">
    <source>
        <dbReference type="HAMAP-Rule" id="MF_01334"/>
    </source>
</evidence>
<evidence type="ECO:0000256" key="2">
    <source>
        <dbReference type="SAM" id="MobiDB-lite"/>
    </source>
</evidence>
<evidence type="ECO:0000305" key="3"/>
<keyword id="KW-1185">Reference proteome</keyword>
<keyword id="KW-0687">Ribonucleoprotein</keyword>
<keyword id="KW-0689">Ribosomal protein</keyword>
<keyword id="KW-0694">RNA-binding</keyword>
<keyword id="KW-0699">rRNA-binding</keyword>
<organism>
    <name type="scientific">Listeria monocytogenes serovar 1/2a (strain ATCC BAA-679 / EGD-e)</name>
    <dbReference type="NCBI Taxonomy" id="169963"/>
    <lineage>
        <taxon>Bacteria</taxon>
        <taxon>Bacillati</taxon>
        <taxon>Bacillota</taxon>
        <taxon>Bacilli</taxon>
        <taxon>Bacillales</taxon>
        <taxon>Listeriaceae</taxon>
        <taxon>Listeria</taxon>
    </lineage>
</organism>
<name>RL25_LISMO</name>
<accession>Q8YAD3</accession>
<dbReference type="EMBL" id="AL591974">
    <property type="protein sequence ID" value="CAD00738.1"/>
    <property type="molecule type" value="Genomic_DNA"/>
</dbReference>
<dbReference type="PIR" id="AD1101">
    <property type="entry name" value="AD1101"/>
</dbReference>
<dbReference type="RefSeq" id="NP_463742.1">
    <property type="nucleotide sequence ID" value="NC_003210.1"/>
</dbReference>
<dbReference type="RefSeq" id="WP_003722740.1">
    <property type="nucleotide sequence ID" value="NZ_CP149495.1"/>
</dbReference>
<dbReference type="SMR" id="Q8YAD3"/>
<dbReference type="STRING" id="169963.gene:17592847"/>
<dbReference type="PaxDb" id="169963-lmo0211"/>
<dbReference type="EnsemblBacteria" id="CAD00738">
    <property type="protein sequence ID" value="CAD00738"/>
    <property type="gene ID" value="CAD00738"/>
</dbReference>
<dbReference type="GeneID" id="987044"/>
<dbReference type="KEGG" id="lmo:lmo0211"/>
<dbReference type="PATRIC" id="fig|169963.11.peg.216"/>
<dbReference type="eggNOG" id="COG1825">
    <property type="taxonomic scope" value="Bacteria"/>
</dbReference>
<dbReference type="HOGENOM" id="CLU_075939_2_0_9"/>
<dbReference type="OrthoDB" id="9790002at2"/>
<dbReference type="PhylomeDB" id="Q8YAD3"/>
<dbReference type="BioCyc" id="LMON169963:LMO0211-MONOMER"/>
<dbReference type="Proteomes" id="UP000000817">
    <property type="component" value="Chromosome"/>
</dbReference>
<dbReference type="GO" id="GO:0022625">
    <property type="term" value="C:cytosolic large ribosomal subunit"/>
    <property type="evidence" value="ECO:0000318"/>
    <property type="project" value="GO_Central"/>
</dbReference>
<dbReference type="GO" id="GO:0008097">
    <property type="term" value="F:5S rRNA binding"/>
    <property type="evidence" value="ECO:0000318"/>
    <property type="project" value="GO_Central"/>
</dbReference>
<dbReference type="GO" id="GO:0003735">
    <property type="term" value="F:structural constituent of ribosome"/>
    <property type="evidence" value="ECO:0007669"/>
    <property type="project" value="InterPro"/>
</dbReference>
<dbReference type="GO" id="GO:0006412">
    <property type="term" value="P:translation"/>
    <property type="evidence" value="ECO:0000318"/>
    <property type="project" value="GO_Central"/>
</dbReference>
<dbReference type="CDD" id="cd00495">
    <property type="entry name" value="Ribosomal_L25_TL5_CTC"/>
    <property type="match status" value="1"/>
</dbReference>
<dbReference type="FunFam" id="2.40.240.10:FF:000013">
    <property type="entry name" value="50S ribosomal protein L25"/>
    <property type="match status" value="1"/>
</dbReference>
<dbReference type="Gene3D" id="2.170.120.20">
    <property type="entry name" value="Ribosomal protein L25, beta domain"/>
    <property type="match status" value="1"/>
</dbReference>
<dbReference type="Gene3D" id="2.40.240.10">
    <property type="entry name" value="Ribosomal Protein L25, Chain P"/>
    <property type="match status" value="1"/>
</dbReference>
<dbReference type="HAMAP" id="MF_01334">
    <property type="entry name" value="Ribosomal_bL25_CTC"/>
    <property type="match status" value="1"/>
</dbReference>
<dbReference type="InterPro" id="IPR020056">
    <property type="entry name" value="Rbsml_bL25/Gln-tRNA_synth_N"/>
</dbReference>
<dbReference type="InterPro" id="IPR011035">
    <property type="entry name" value="Ribosomal_bL25/Gln-tRNA_synth"/>
</dbReference>
<dbReference type="InterPro" id="IPR020057">
    <property type="entry name" value="Ribosomal_bL25_b-dom"/>
</dbReference>
<dbReference type="InterPro" id="IPR037121">
    <property type="entry name" value="Ribosomal_bL25_C"/>
</dbReference>
<dbReference type="InterPro" id="IPR001021">
    <property type="entry name" value="Ribosomal_bL25_long"/>
</dbReference>
<dbReference type="InterPro" id="IPR029751">
    <property type="entry name" value="Ribosomal_L25_dom"/>
</dbReference>
<dbReference type="InterPro" id="IPR020930">
    <property type="entry name" value="Ribosomal_uL5_bac-type"/>
</dbReference>
<dbReference type="NCBIfam" id="TIGR00731">
    <property type="entry name" value="bL25_bact_ctc"/>
    <property type="match status" value="1"/>
</dbReference>
<dbReference type="NCBIfam" id="NF004133">
    <property type="entry name" value="PRK05618.2-4"/>
    <property type="match status" value="1"/>
</dbReference>
<dbReference type="PANTHER" id="PTHR33284">
    <property type="entry name" value="RIBOSOMAL PROTEIN L25/GLN-TRNA SYNTHETASE, ANTI-CODON-BINDING DOMAIN-CONTAINING PROTEIN"/>
    <property type="match status" value="1"/>
</dbReference>
<dbReference type="PANTHER" id="PTHR33284:SF1">
    <property type="entry name" value="RIBOSOMAL PROTEIN L25_GLN-TRNA SYNTHETASE, ANTI-CODON-BINDING DOMAIN-CONTAINING PROTEIN"/>
    <property type="match status" value="1"/>
</dbReference>
<dbReference type="Pfam" id="PF01386">
    <property type="entry name" value="Ribosomal_L25p"/>
    <property type="match status" value="1"/>
</dbReference>
<dbReference type="Pfam" id="PF14693">
    <property type="entry name" value="Ribosomal_TL5_C"/>
    <property type="match status" value="1"/>
</dbReference>
<dbReference type="SUPFAM" id="SSF50715">
    <property type="entry name" value="Ribosomal protein L25-like"/>
    <property type="match status" value="1"/>
</dbReference>
<feature type="chain" id="PRO_0000181565" description="Large ribosomal subunit protein bL25">
    <location>
        <begin position="1"/>
        <end position="207"/>
    </location>
</feature>
<feature type="region of interest" description="Disordered" evidence="2">
    <location>
        <begin position="171"/>
        <end position="207"/>
    </location>
</feature>
<feature type="compositionally biased region" description="Basic and acidic residues" evidence="2">
    <location>
        <begin position="196"/>
        <end position="207"/>
    </location>
</feature>
<sequence length="207" mass="22654">MATTLEVQKRETTQHSEVTRLRSEGKVPGIIYGYKSENVPVSVDSLELIKAVRDNGRNAVFSVTVDGKKLNVLLHEYQVDPLKDVLVHVDLLAVDMNEEVETDVRVVLVGDAPGVKAGGVLQQIIHDVKVSATPEKLPETIELDISSLEIGDVLTTNDLPENKDYVVQAEEEETVVTVSAPRAEEEPTTTEAPEPEAVHGKDEEPVE</sequence>
<protein>
    <recommendedName>
        <fullName evidence="1">Large ribosomal subunit protein bL25</fullName>
    </recommendedName>
    <alternativeName>
        <fullName evidence="3">50S ribosomal protein L25</fullName>
    </alternativeName>
    <alternativeName>
        <fullName evidence="1">General stress protein CTC</fullName>
    </alternativeName>
</protein>
<comment type="function">
    <text evidence="1">This is one of the proteins that binds to the 5S RNA in the ribosome where it forms part of the central protuberance.</text>
</comment>
<comment type="subunit">
    <text evidence="1">Part of the 50S ribosomal subunit; part of the 5S rRNA/L5/L18/L25 subcomplex. Contacts the 5S rRNA. Binds to the 5S rRNA independently of L5 and L18.</text>
</comment>
<comment type="similarity">
    <text evidence="1">Belongs to the bacterial ribosomal protein bL25 family. CTC subfamily.</text>
</comment>
<reference key="1">
    <citation type="journal article" date="2001" name="Science">
        <title>Comparative genomics of Listeria species.</title>
        <authorList>
            <person name="Glaser P."/>
            <person name="Frangeul L."/>
            <person name="Buchrieser C."/>
            <person name="Rusniok C."/>
            <person name="Amend A."/>
            <person name="Baquero F."/>
            <person name="Berche P."/>
            <person name="Bloecker H."/>
            <person name="Brandt P."/>
            <person name="Chakraborty T."/>
            <person name="Charbit A."/>
            <person name="Chetouani F."/>
            <person name="Couve E."/>
            <person name="de Daruvar A."/>
            <person name="Dehoux P."/>
            <person name="Domann E."/>
            <person name="Dominguez-Bernal G."/>
            <person name="Duchaud E."/>
            <person name="Durant L."/>
            <person name="Dussurget O."/>
            <person name="Entian K.-D."/>
            <person name="Fsihi H."/>
            <person name="Garcia-del Portillo F."/>
            <person name="Garrido P."/>
            <person name="Gautier L."/>
            <person name="Goebel W."/>
            <person name="Gomez-Lopez N."/>
            <person name="Hain T."/>
            <person name="Hauf J."/>
            <person name="Jackson D."/>
            <person name="Jones L.-M."/>
            <person name="Kaerst U."/>
            <person name="Kreft J."/>
            <person name="Kuhn M."/>
            <person name="Kunst F."/>
            <person name="Kurapkat G."/>
            <person name="Madueno E."/>
            <person name="Maitournam A."/>
            <person name="Mata Vicente J."/>
            <person name="Ng E."/>
            <person name="Nedjari H."/>
            <person name="Nordsiek G."/>
            <person name="Novella S."/>
            <person name="de Pablos B."/>
            <person name="Perez-Diaz J.-C."/>
            <person name="Purcell R."/>
            <person name="Remmel B."/>
            <person name="Rose M."/>
            <person name="Schlueter T."/>
            <person name="Simoes N."/>
            <person name="Tierrez A."/>
            <person name="Vazquez-Boland J.-A."/>
            <person name="Voss H."/>
            <person name="Wehland J."/>
            <person name="Cossart P."/>
        </authorList>
    </citation>
    <scope>NUCLEOTIDE SEQUENCE [LARGE SCALE GENOMIC DNA]</scope>
    <source>
        <strain>ATCC BAA-679 / EGD-e</strain>
    </source>
</reference>
<gene>
    <name evidence="1" type="primary">rplY</name>
    <name evidence="1" type="synonym">ctc</name>
    <name type="ordered locus">lmo0211</name>
</gene>